<gene>
    <name type="primary">OR1D5</name>
</gene>
<evidence type="ECO:0000255" key="1"/>
<evidence type="ECO:0000255" key="2">
    <source>
        <dbReference type="PROSITE-ProRule" id="PRU00521"/>
    </source>
</evidence>
<evidence type="ECO:0000305" key="3"/>
<name>OR1D5_HUMAN</name>
<feature type="chain" id="PRO_0000150422" description="Olfactory receptor 1D5">
    <location>
        <begin position="1"/>
        <end position="312"/>
    </location>
</feature>
<feature type="topological domain" description="Extracellular" evidence="1">
    <location>
        <begin position="1"/>
        <end position="25"/>
    </location>
</feature>
<feature type="transmembrane region" description="Helical; Name=1" evidence="1">
    <location>
        <begin position="26"/>
        <end position="49"/>
    </location>
</feature>
<feature type="topological domain" description="Cytoplasmic" evidence="1">
    <location>
        <begin position="50"/>
        <end position="57"/>
    </location>
</feature>
<feature type="transmembrane region" description="Helical; Name=2" evidence="1">
    <location>
        <begin position="58"/>
        <end position="79"/>
    </location>
</feature>
<feature type="topological domain" description="Extracellular" evidence="1">
    <location>
        <begin position="80"/>
        <end position="100"/>
    </location>
</feature>
<feature type="transmembrane region" description="Helical; Name=3" evidence="1">
    <location>
        <begin position="101"/>
        <end position="120"/>
    </location>
</feature>
<feature type="topological domain" description="Cytoplasmic" evidence="1">
    <location>
        <begin position="121"/>
        <end position="140"/>
    </location>
</feature>
<feature type="transmembrane region" description="Helical; Name=4" evidence="1">
    <location>
        <begin position="141"/>
        <end position="158"/>
    </location>
</feature>
<feature type="topological domain" description="Extracellular" evidence="1">
    <location>
        <begin position="159"/>
        <end position="196"/>
    </location>
</feature>
<feature type="transmembrane region" description="Helical; Name=5" evidence="1">
    <location>
        <begin position="197"/>
        <end position="220"/>
    </location>
</feature>
<feature type="topological domain" description="Cytoplasmic" evidence="1">
    <location>
        <begin position="221"/>
        <end position="237"/>
    </location>
</feature>
<feature type="transmembrane region" description="Helical; Name=6" evidence="1">
    <location>
        <begin position="238"/>
        <end position="260"/>
    </location>
</feature>
<feature type="topological domain" description="Extracellular" evidence="1">
    <location>
        <begin position="261"/>
        <end position="271"/>
    </location>
</feature>
<feature type="transmembrane region" description="Helical; Name=7" evidence="1">
    <location>
        <begin position="272"/>
        <end position="291"/>
    </location>
</feature>
<feature type="topological domain" description="Cytoplasmic" evidence="1">
    <location>
        <begin position="292"/>
        <end position="312"/>
    </location>
</feature>
<feature type="glycosylation site" description="N-linked (GlcNAc...) asparagine" evidence="1">
    <location>
        <position position="5"/>
    </location>
</feature>
<feature type="disulfide bond" evidence="2">
    <location>
        <begin position="97"/>
        <end position="189"/>
    </location>
</feature>
<reference key="1">
    <citation type="journal article" date="2000" name="Genomics">
        <title>Sequence, structure, and evolution of a complete human olfactory receptor gene cluster.</title>
        <authorList>
            <person name="Glusman G."/>
            <person name="Sosinsky A."/>
            <person name="Ben-Asher E."/>
            <person name="Avidan N."/>
            <person name="Sonkin D."/>
            <person name="Bahar A."/>
            <person name="Rosenthal A."/>
            <person name="Clifton S."/>
            <person name="Roe B."/>
            <person name="Ferraz C."/>
            <person name="Demaille J.G."/>
            <person name="Lancet D."/>
        </authorList>
    </citation>
    <scope>NUCLEOTIDE SEQUENCE [GENOMIC DNA]</scope>
</reference>
<reference key="2">
    <citation type="submission" date="1996-04" db="EMBL/GenBank/DDBJ databases">
        <authorList>
            <person name="Ferraz C."/>
            <person name="Demaille J.G."/>
        </authorList>
    </citation>
    <scope>NUCLEOTIDE SEQUENCE [GENOMIC DNA]</scope>
</reference>
<reference key="3">
    <citation type="journal article" date="2002" name="Genomics">
        <title>DEFOG: a practical scheme for deciphering families of genes.</title>
        <authorList>
            <person name="Fuchs T."/>
            <person name="Malecova B."/>
            <person name="Linhart C."/>
            <person name="Sharan R."/>
            <person name="Khen M."/>
            <person name="Herwig R."/>
            <person name="Shmulevich D."/>
            <person name="Elkon R."/>
            <person name="Steinfath M."/>
            <person name="O'Brien J.K."/>
            <person name="Radelof U."/>
            <person name="Lehrach H."/>
            <person name="Lancet D."/>
            <person name="Shamir R."/>
        </authorList>
    </citation>
    <scope>NUCLEOTIDE SEQUENCE [GENOMIC DNA] OF 68-282</scope>
</reference>
<reference key="4">
    <citation type="journal article" date="2004" name="Genome Res.">
        <title>The status, quality, and expansion of the NIH full-length cDNA project: the Mammalian Gene Collection (MGC).</title>
        <authorList>
            <consortium name="The MGC Project Team"/>
        </authorList>
    </citation>
    <scope>NUCLEOTIDE SEQUENCE [LARGE SCALE MRNA] OF 6-197</scope>
</reference>
<proteinExistence type="evidence at transcript level"/>
<keyword id="KW-1003">Cell membrane</keyword>
<keyword id="KW-1015">Disulfide bond</keyword>
<keyword id="KW-0297">G-protein coupled receptor</keyword>
<keyword id="KW-0325">Glycoprotein</keyword>
<keyword id="KW-0472">Membrane</keyword>
<keyword id="KW-0552">Olfaction</keyword>
<keyword id="KW-0675">Receptor</keyword>
<keyword id="KW-1185">Reference proteome</keyword>
<keyword id="KW-0716">Sensory transduction</keyword>
<keyword id="KW-0807">Transducer</keyword>
<keyword id="KW-0812">Transmembrane</keyword>
<keyword id="KW-1133">Transmembrane helix</keyword>
<dbReference type="EMBL" id="AF087923">
    <property type="protein sequence ID" value="AAF37313.1"/>
    <property type="molecule type" value="Genomic_DNA"/>
</dbReference>
<dbReference type="EMBL" id="U53930">
    <property type="protein sequence ID" value="AAD10841.1"/>
    <property type="molecule type" value="Genomic_DNA"/>
</dbReference>
<dbReference type="EMBL" id="AF399533">
    <property type="protein sequence ID" value="AAK95018.1"/>
    <property type="molecule type" value="Genomic_DNA"/>
</dbReference>
<dbReference type="EMBL" id="BC106876">
    <property type="protein sequence ID" value="AAI06877.1"/>
    <property type="molecule type" value="mRNA"/>
</dbReference>
<dbReference type="CCDS" id="CCDS58499.1"/>
<dbReference type="RefSeq" id="NP_055381.1">
    <property type="nucleotide sequence ID" value="NM_014566.1"/>
</dbReference>
<dbReference type="SMR" id="P58170"/>
<dbReference type="BioGRID" id="113976">
    <property type="interactions" value="19"/>
</dbReference>
<dbReference type="FunCoup" id="P58170">
    <property type="interactions" value="440"/>
</dbReference>
<dbReference type="IntAct" id="P58170">
    <property type="interactions" value="1"/>
</dbReference>
<dbReference type="STRING" id="9606.ENSP00000459028"/>
<dbReference type="GlyCosmos" id="P58170">
    <property type="glycosylation" value="1 site, No reported glycans"/>
</dbReference>
<dbReference type="GlyGen" id="P58170">
    <property type="glycosylation" value="1 site"/>
</dbReference>
<dbReference type="BioMuta" id="OR1D5"/>
<dbReference type="DMDM" id="14423784"/>
<dbReference type="PaxDb" id="9606-ENSP00000459028"/>
<dbReference type="Antibodypedia" id="62120">
    <property type="antibodies" value="80 antibodies from 19 providers"/>
</dbReference>
<dbReference type="DNASU" id="8386"/>
<dbReference type="Ensembl" id="ENST00000575751.1">
    <property type="protein sequence ID" value="ENSP00000459028.1"/>
    <property type="gene ID" value="ENSG00000262628.1"/>
</dbReference>
<dbReference type="GeneID" id="8386"/>
<dbReference type="KEGG" id="hsa:8386"/>
<dbReference type="MANE-Select" id="ENST00000575751.1">
    <property type="protein sequence ID" value="ENSP00000459028.1"/>
    <property type="RefSeq nucleotide sequence ID" value="NM_014566.1"/>
    <property type="RefSeq protein sequence ID" value="NP_055381.1"/>
</dbReference>
<dbReference type="UCSC" id="uc021tns.1">
    <property type="organism name" value="human"/>
</dbReference>
<dbReference type="AGR" id="HGNC:8186"/>
<dbReference type="CTD" id="8386"/>
<dbReference type="GeneCards" id="OR1D5"/>
<dbReference type="HGNC" id="HGNC:8186">
    <property type="gene designation" value="OR1D5"/>
</dbReference>
<dbReference type="HPA" id="ENSG00000262628">
    <property type="expression patterns" value="Not detected"/>
</dbReference>
<dbReference type="neXtProt" id="NX_P58170"/>
<dbReference type="PharmGKB" id="PA32060"/>
<dbReference type="VEuPathDB" id="HostDB:ENSG00000262628"/>
<dbReference type="eggNOG" id="ENOG502T9JB">
    <property type="taxonomic scope" value="Eukaryota"/>
</dbReference>
<dbReference type="GeneTree" id="ENSGT00940000164752"/>
<dbReference type="HOGENOM" id="CLU_012526_5_5_1"/>
<dbReference type="InParanoid" id="P58170"/>
<dbReference type="OMA" id="EIHYLFC"/>
<dbReference type="OrthoDB" id="9483419at2759"/>
<dbReference type="PAN-GO" id="P58170">
    <property type="GO annotations" value="3 GO annotations based on evolutionary models"/>
</dbReference>
<dbReference type="PhylomeDB" id="P58170"/>
<dbReference type="PathwayCommons" id="P58170"/>
<dbReference type="Reactome" id="R-HSA-381753">
    <property type="pathway name" value="Olfactory Signaling Pathway"/>
</dbReference>
<dbReference type="Reactome" id="R-HSA-9752946">
    <property type="pathway name" value="Expression and translocation of olfactory receptors"/>
</dbReference>
<dbReference type="BioGRID-ORCS" id="8386">
    <property type="hits" value="12 hits in 692 CRISPR screens"/>
</dbReference>
<dbReference type="GeneWiki" id="OR1D5"/>
<dbReference type="GenomeRNAi" id="8386"/>
<dbReference type="Pharos" id="P58170">
    <property type="development level" value="Tdark"/>
</dbReference>
<dbReference type="PRO" id="PR:P58170"/>
<dbReference type="Proteomes" id="UP000005640">
    <property type="component" value="Chromosome 17"/>
</dbReference>
<dbReference type="RNAct" id="P58170">
    <property type="molecule type" value="protein"/>
</dbReference>
<dbReference type="Bgee" id="ENSG00000262628">
    <property type="expression patterns" value="Expressed in male germ line stem cell (sensu Vertebrata) in testis"/>
</dbReference>
<dbReference type="ExpressionAtlas" id="P58170">
    <property type="expression patterns" value="baseline and differential"/>
</dbReference>
<dbReference type="GO" id="GO:0005886">
    <property type="term" value="C:plasma membrane"/>
    <property type="evidence" value="ECO:0000318"/>
    <property type="project" value="GO_Central"/>
</dbReference>
<dbReference type="GO" id="GO:0004930">
    <property type="term" value="F:G protein-coupled receptor activity"/>
    <property type="evidence" value="ECO:0000304"/>
    <property type="project" value="ProtInc"/>
</dbReference>
<dbReference type="GO" id="GO:0004984">
    <property type="term" value="F:olfactory receptor activity"/>
    <property type="evidence" value="ECO:0000318"/>
    <property type="project" value="GO_Central"/>
</dbReference>
<dbReference type="GO" id="GO:0007186">
    <property type="term" value="P:G protein-coupled receptor signaling pathway"/>
    <property type="evidence" value="ECO:0000304"/>
    <property type="project" value="ProtInc"/>
</dbReference>
<dbReference type="GO" id="GO:0007608">
    <property type="term" value="P:sensory perception of smell"/>
    <property type="evidence" value="ECO:0000304"/>
    <property type="project" value="ProtInc"/>
</dbReference>
<dbReference type="GO" id="GO:0007165">
    <property type="term" value="P:signal transduction"/>
    <property type="evidence" value="ECO:0000318"/>
    <property type="project" value="GO_Central"/>
</dbReference>
<dbReference type="FunFam" id="1.20.1070.10:FF:000009">
    <property type="entry name" value="Olfactory receptor"/>
    <property type="match status" value="1"/>
</dbReference>
<dbReference type="Gene3D" id="1.20.1070.10">
    <property type="entry name" value="Rhodopsin 7-helix transmembrane proteins"/>
    <property type="match status" value="1"/>
</dbReference>
<dbReference type="InterPro" id="IPR000276">
    <property type="entry name" value="GPCR_Rhodpsn"/>
</dbReference>
<dbReference type="InterPro" id="IPR017452">
    <property type="entry name" value="GPCR_Rhodpsn_7TM"/>
</dbReference>
<dbReference type="InterPro" id="IPR000725">
    <property type="entry name" value="Olfact_rcpt"/>
</dbReference>
<dbReference type="PANTHER" id="PTHR48001">
    <property type="entry name" value="OLFACTORY RECEPTOR"/>
    <property type="match status" value="1"/>
</dbReference>
<dbReference type="Pfam" id="PF13853">
    <property type="entry name" value="7tm_4"/>
    <property type="match status" value="1"/>
</dbReference>
<dbReference type="PRINTS" id="PR00237">
    <property type="entry name" value="GPCRRHODOPSN"/>
</dbReference>
<dbReference type="PRINTS" id="PR00245">
    <property type="entry name" value="OLFACTORYR"/>
</dbReference>
<dbReference type="SUPFAM" id="SSF81321">
    <property type="entry name" value="Family A G protein-coupled receptor-like"/>
    <property type="match status" value="1"/>
</dbReference>
<dbReference type="PROSITE" id="PS50262">
    <property type="entry name" value="G_PROTEIN_RECEP_F1_2"/>
    <property type="match status" value="1"/>
</dbReference>
<comment type="function">
    <text evidence="3">Odorant receptor.</text>
</comment>
<comment type="subcellular location">
    <subcellularLocation>
        <location>Cell membrane</location>
        <topology>Multi-pass membrane protein</topology>
    </subcellularLocation>
</comment>
<comment type="similarity">
    <text evidence="2">Belongs to the G-protein coupled receptor 1 family.</text>
</comment>
<comment type="online information" name="Human Olfactory Receptor Data Exploratorium (HORDE)">
    <link uri="http://genome.weizmann.ac.il/horde/card/index/symbol:OR1D5"/>
</comment>
<protein>
    <recommendedName>
        <fullName>Olfactory receptor 1D5</fullName>
    </recommendedName>
    <alternativeName>
        <fullName>Olfactory receptor 17-31</fullName>
        <shortName>OR17-31</shortName>
    </alternativeName>
</protein>
<sequence length="312" mass="35424">MDGDNQSENSQFLLLGISESPEQQRILFWMFLSMYLVTVLGNVLIILAISSDSHLHTPMYFFLANLSFTDLFFVTNTIPKMLVNFQSQNKAISYAGCLTQLYFLVSLVTLDNLILAVMAYDRYVATCCPLHYVTAMSPGLCVLLLSLCWGLSVLYGLLLTFLLTRVTFCGPREIHYLFCDMYILLWLACSNTHIIHTALIATGCFIFLTPLGFMTTSYVRIVRTILQMPSASKKYKTFSTCASHLGVVSLFYGTLAMVYLQPLHTYSMKDSVATVMYAVLTPMMNPFIYRLRNKDMHGAPGRVLWRPFQRPK</sequence>
<organism>
    <name type="scientific">Homo sapiens</name>
    <name type="common">Human</name>
    <dbReference type="NCBI Taxonomy" id="9606"/>
    <lineage>
        <taxon>Eukaryota</taxon>
        <taxon>Metazoa</taxon>
        <taxon>Chordata</taxon>
        <taxon>Craniata</taxon>
        <taxon>Vertebrata</taxon>
        <taxon>Euteleostomi</taxon>
        <taxon>Mammalia</taxon>
        <taxon>Eutheria</taxon>
        <taxon>Euarchontoglires</taxon>
        <taxon>Primates</taxon>
        <taxon>Haplorrhini</taxon>
        <taxon>Catarrhini</taxon>
        <taxon>Hominidae</taxon>
        <taxon>Homo</taxon>
    </lineage>
</organism>
<accession>P58170</accession>
<accession>A0AUK4</accession>
<accession>Q96RA6</accession>